<accession>B2K5Q7</accession>
<comment type="similarity">
    <text evidence="1">Belongs to the UPF0270 family.</text>
</comment>
<dbReference type="EMBL" id="CP001048">
    <property type="protein sequence ID" value="ACC90866.1"/>
    <property type="molecule type" value="Genomic_DNA"/>
</dbReference>
<dbReference type="RefSeq" id="WP_011193222.1">
    <property type="nucleotide sequence ID" value="NZ_CP009780.1"/>
</dbReference>
<dbReference type="SMR" id="B2K5Q7"/>
<dbReference type="KEGG" id="ypb:YPTS_3917"/>
<dbReference type="PATRIC" id="fig|502801.10.peg.3382"/>
<dbReference type="Gene3D" id="1.10.10.610">
    <property type="entry name" value="YehU-like"/>
    <property type="match status" value="1"/>
</dbReference>
<dbReference type="HAMAP" id="MF_00690">
    <property type="entry name" value="UPF0270"/>
    <property type="match status" value="1"/>
</dbReference>
<dbReference type="InterPro" id="IPR010648">
    <property type="entry name" value="UPF0270"/>
</dbReference>
<dbReference type="InterPro" id="IPR036685">
    <property type="entry name" value="YehU-like_sf"/>
</dbReference>
<dbReference type="NCBIfam" id="NF003438">
    <property type="entry name" value="PRK04966.1"/>
    <property type="match status" value="1"/>
</dbReference>
<dbReference type="Pfam" id="PF06794">
    <property type="entry name" value="UPF0270"/>
    <property type="match status" value="1"/>
</dbReference>
<dbReference type="PIRSF" id="PIRSF006169">
    <property type="entry name" value="UCP006169"/>
    <property type="match status" value="1"/>
</dbReference>
<dbReference type="SUPFAM" id="SSF118001">
    <property type="entry name" value="YehU-like"/>
    <property type="match status" value="1"/>
</dbReference>
<reference key="1">
    <citation type="submission" date="2008-04" db="EMBL/GenBank/DDBJ databases">
        <title>Complete sequence of Yersinia pseudotuberculosis PB1/+.</title>
        <authorList>
            <person name="Copeland A."/>
            <person name="Lucas S."/>
            <person name="Lapidus A."/>
            <person name="Glavina del Rio T."/>
            <person name="Dalin E."/>
            <person name="Tice H."/>
            <person name="Bruce D."/>
            <person name="Goodwin L."/>
            <person name="Pitluck S."/>
            <person name="Munk A.C."/>
            <person name="Brettin T."/>
            <person name="Detter J.C."/>
            <person name="Han C."/>
            <person name="Tapia R."/>
            <person name="Schmutz J."/>
            <person name="Larimer F."/>
            <person name="Land M."/>
            <person name="Hauser L."/>
            <person name="Challacombe J.F."/>
            <person name="Green L."/>
            <person name="Lindler L.E."/>
            <person name="Nikolich M.P."/>
            <person name="Richardson P."/>
        </authorList>
    </citation>
    <scope>NUCLEOTIDE SEQUENCE [LARGE SCALE GENOMIC DNA]</scope>
    <source>
        <strain>PB1/+</strain>
    </source>
</reference>
<name>Y3917_YERPB</name>
<gene>
    <name type="ordered locus">YPTS_3917</name>
</gene>
<sequence>MIIPWQQVDSETLDNLLEAFVLREGTDYGEHERSLTEKVADVRRQLVSGEAVLVWSELHETINIMPRGSFHAGAEEQQ</sequence>
<proteinExistence type="inferred from homology"/>
<organism>
    <name type="scientific">Yersinia pseudotuberculosis serotype IB (strain PB1/+)</name>
    <dbReference type="NCBI Taxonomy" id="502801"/>
    <lineage>
        <taxon>Bacteria</taxon>
        <taxon>Pseudomonadati</taxon>
        <taxon>Pseudomonadota</taxon>
        <taxon>Gammaproteobacteria</taxon>
        <taxon>Enterobacterales</taxon>
        <taxon>Yersiniaceae</taxon>
        <taxon>Yersinia</taxon>
    </lineage>
</organism>
<protein>
    <recommendedName>
        <fullName evidence="1">UPF0270 protein YPTS_3917</fullName>
    </recommendedName>
</protein>
<feature type="chain" id="PRO_1000132029" description="UPF0270 protein YPTS_3917">
    <location>
        <begin position="1"/>
        <end position="78"/>
    </location>
</feature>
<evidence type="ECO:0000255" key="1">
    <source>
        <dbReference type="HAMAP-Rule" id="MF_00690"/>
    </source>
</evidence>